<name>YRAO_BACSU</name>
<evidence type="ECO:0000250" key="1"/>
<evidence type="ECO:0000255" key="2"/>
<evidence type="ECO:0000305" key="3"/>
<keyword id="KW-1003">Cell membrane</keyword>
<keyword id="KW-0163">Citrate utilization</keyword>
<keyword id="KW-0472">Membrane</keyword>
<keyword id="KW-1185">Reference proteome</keyword>
<keyword id="KW-0769">Symport</keyword>
<keyword id="KW-0812">Transmembrane</keyword>
<keyword id="KW-1133">Transmembrane helix</keyword>
<keyword id="KW-0813">Transport</keyword>
<feature type="chain" id="PRO_0000049859" description="Uncharacterized transporter YraO">
    <location>
        <begin position="1"/>
        <end position="438"/>
    </location>
</feature>
<feature type="transmembrane region" description="Helical" evidence="2">
    <location>
        <begin position="22"/>
        <end position="42"/>
    </location>
</feature>
<feature type="transmembrane region" description="Helical" evidence="2">
    <location>
        <begin position="59"/>
        <end position="79"/>
    </location>
</feature>
<feature type="transmembrane region" description="Helical" evidence="2">
    <location>
        <begin position="89"/>
        <end position="109"/>
    </location>
</feature>
<feature type="transmembrane region" description="Helical" evidence="2">
    <location>
        <begin position="137"/>
        <end position="157"/>
    </location>
</feature>
<feature type="transmembrane region" description="Helical" evidence="2">
    <location>
        <begin position="174"/>
        <end position="194"/>
    </location>
</feature>
<feature type="transmembrane region" description="Helical" evidence="2">
    <location>
        <begin position="237"/>
        <end position="257"/>
    </location>
</feature>
<feature type="transmembrane region" description="Helical" evidence="2">
    <location>
        <begin position="258"/>
        <end position="278"/>
    </location>
</feature>
<feature type="transmembrane region" description="Helical" evidence="2">
    <location>
        <begin position="292"/>
        <end position="312"/>
    </location>
</feature>
<feature type="transmembrane region" description="Helical" evidence="2">
    <location>
        <begin position="330"/>
        <end position="350"/>
    </location>
</feature>
<feature type="transmembrane region" description="Helical" evidence="2">
    <location>
        <begin position="356"/>
        <end position="376"/>
    </location>
</feature>
<feature type="transmembrane region" description="Helical" evidence="2">
    <location>
        <begin position="380"/>
        <end position="400"/>
    </location>
</feature>
<feature type="transmembrane region" description="Helical" evidence="2">
    <location>
        <begin position="418"/>
        <end position="438"/>
    </location>
</feature>
<protein>
    <recommendedName>
        <fullName>Uncharacterized transporter YraO</fullName>
    </recommendedName>
</protein>
<comment type="function">
    <text evidence="1">Transports the free citrate anion.</text>
</comment>
<comment type="subcellular location">
    <subcellularLocation>
        <location evidence="3">Cell membrane</location>
        <topology evidence="3">Multi-pass membrane protein</topology>
    </subcellularLocation>
</comment>
<comment type="similarity">
    <text evidence="3">Belongs to the CitM (TC 2.A.11) transporter family.</text>
</comment>
<organism>
    <name type="scientific">Bacillus subtilis (strain 168)</name>
    <dbReference type="NCBI Taxonomy" id="224308"/>
    <lineage>
        <taxon>Bacteria</taxon>
        <taxon>Bacillati</taxon>
        <taxon>Bacillota</taxon>
        <taxon>Bacilli</taxon>
        <taxon>Bacillales</taxon>
        <taxon>Bacillaceae</taxon>
        <taxon>Bacillus</taxon>
    </lineage>
</organism>
<proteinExistence type="inferred from homology"/>
<sequence length="438" mass="46727">MLTILGFSMVTVFTILIMTKKVSPIVALTITPIVFALIGGFGKGIGDMILEGIQTVASSAALLLFAILFFGILIDAGLFDPLIEKILSIVKGDPVKIAIGSAVLAMLIALDGDGTTTYMITVSAMLPLYKRIGMNPMVMATLAMLSLSIVSGMTPWGGPATRAISVLGLDPSDFFVPLLPTMLGGIACVIFLAFLMGRKERNRIGIVQLEPRHITKDSSQSYMAATLESEQLKRPRLIYLNLFLVISIMVFIVLGTKHPSVLFLIGFVLALTINYPNVKMQKERIAEHSGNAITVVLLVFSAGVFAGILSGTKMVDAIAGSLISIIPSSMGGFFPVIVALTSIPFTFVLSNDAYYFGMVPIFAEAASAYGIEPVEIARASIMGQPVHLMSPLVASTVLLVSMLKMDLGSFQRFAVKWAVITSLVITLLAIITGAITIL</sequence>
<dbReference type="EMBL" id="U93875">
    <property type="protein sequence ID" value="AAB80885.1"/>
    <property type="molecule type" value="Genomic_DNA"/>
</dbReference>
<dbReference type="EMBL" id="AL009126">
    <property type="protein sequence ID" value="CAB14627.1"/>
    <property type="molecule type" value="Genomic_DNA"/>
</dbReference>
<dbReference type="EMBL" id="X92868">
    <property type="protein sequence ID" value="CAA63458.1"/>
    <property type="molecule type" value="Genomic_DNA"/>
</dbReference>
<dbReference type="PIR" id="G69971">
    <property type="entry name" value="G69971"/>
</dbReference>
<dbReference type="RefSeq" id="NP_390563.1">
    <property type="nucleotide sequence ID" value="NC_000964.3"/>
</dbReference>
<dbReference type="RefSeq" id="WP_003246029.1">
    <property type="nucleotide sequence ID" value="NZ_OZ025638.1"/>
</dbReference>
<dbReference type="SMR" id="O05407"/>
<dbReference type="FunCoup" id="O05407">
    <property type="interactions" value="29"/>
</dbReference>
<dbReference type="STRING" id="224308.BSU26860"/>
<dbReference type="TCDB" id="2.A.11.1.5">
    <property type="family name" value="the citrate-mg(2+):h(+) (citm) citrate-ca(2+):h(+) (cith) symporter (citmhs) family"/>
</dbReference>
<dbReference type="jPOST" id="O05407"/>
<dbReference type="PaxDb" id="224308-BSU26860"/>
<dbReference type="EnsemblBacteria" id="CAB14627">
    <property type="protein sequence ID" value="CAB14627"/>
    <property type="gene ID" value="BSU_26860"/>
</dbReference>
<dbReference type="GeneID" id="937610"/>
<dbReference type="KEGG" id="bsu:BSU26860"/>
<dbReference type="PATRIC" id="fig|224308.179.peg.2918"/>
<dbReference type="eggNOG" id="COG2851">
    <property type="taxonomic scope" value="Bacteria"/>
</dbReference>
<dbReference type="InParanoid" id="O05407"/>
<dbReference type="OrthoDB" id="5329450at2"/>
<dbReference type="PhylomeDB" id="O05407"/>
<dbReference type="BioCyc" id="BSUB:BSU26860-MONOMER"/>
<dbReference type="Proteomes" id="UP000001570">
    <property type="component" value="Chromosome"/>
</dbReference>
<dbReference type="GO" id="GO:0005886">
    <property type="term" value="C:plasma membrane"/>
    <property type="evidence" value="ECO:0000318"/>
    <property type="project" value="GO_Central"/>
</dbReference>
<dbReference type="GO" id="GO:0015137">
    <property type="term" value="F:citrate transmembrane transporter activity"/>
    <property type="evidence" value="ECO:0007669"/>
    <property type="project" value="InterPro"/>
</dbReference>
<dbReference type="GO" id="GO:0015293">
    <property type="term" value="F:symporter activity"/>
    <property type="evidence" value="ECO:0007669"/>
    <property type="project" value="UniProtKB-KW"/>
</dbReference>
<dbReference type="GO" id="GO:0022857">
    <property type="term" value="F:transmembrane transporter activity"/>
    <property type="evidence" value="ECO:0000318"/>
    <property type="project" value="GO_Central"/>
</dbReference>
<dbReference type="GO" id="GO:0006101">
    <property type="term" value="P:citrate metabolic process"/>
    <property type="evidence" value="ECO:0007669"/>
    <property type="project" value="UniProtKB-KW"/>
</dbReference>
<dbReference type="GO" id="GO:0055085">
    <property type="term" value="P:transmembrane transport"/>
    <property type="evidence" value="ECO:0000318"/>
    <property type="project" value="GO_Central"/>
</dbReference>
<dbReference type="InterPro" id="IPR004680">
    <property type="entry name" value="Cit_transptr-like_dom"/>
</dbReference>
<dbReference type="InterPro" id="IPR014738">
    <property type="entry name" value="Citrate_transporter"/>
</dbReference>
<dbReference type="NCBIfam" id="TIGR00784">
    <property type="entry name" value="citMHS"/>
    <property type="match status" value="1"/>
</dbReference>
<dbReference type="Pfam" id="PF03600">
    <property type="entry name" value="CitMHS"/>
    <property type="match status" value="1"/>
</dbReference>
<reference key="1">
    <citation type="journal article" date="1997" name="Microbiology">
        <title>Sequence of the Bacillus subtilis genome region in the vicinity of the lev operon reveals two new extracytoplasmic function RNA polymerase sigma factors SigV and SigZ.</title>
        <authorList>
            <person name="Sorokin A."/>
            <person name="Bolotin A."/>
            <person name="Purnelle B."/>
            <person name="Hilbert H."/>
            <person name="Lauber J."/>
            <person name="Duesterhoeft A."/>
            <person name="Ehrlich S.D."/>
        </authorList>
    </citation>
    <scope>NUCLEOTIDE SEQUENCE [GENOMIC DNA]</scope>
    <source>
        <strain>168</strain>
    </source>
</reference>
<reference key="2">
    <citation type="journal article" date="1997" name="Nature">
        <title>The complete genome sequence of the Gram-positive bacterium Bacillus subtilis.</title>
        <authorList>
            <person name="Kunst F."/>
            <person name="Ogasawara N."/>
            <person name="Moszer I."/>
            <person name="Albertini A.M."/>
            <person name="Alloni G."/>
            <person name="Azevedo V."/>
            <person name="Bertero M.G."/>
            <person name="Bessieres P."/>
            <person name="Bolotin A."/>
            <person name="Borchert S."/>
            <person name="Borriss R."/>
            <person name="Boursier L."/>
            <person name="Brans A."/>
            <person name="Braun M."/>
            <person name="Brignell S.C."/>
            <person name="Bron S."/>
            <person name="Brouillet S."/>
            <person name="Bruschi C.V."/>
            <person name="Caldwell B."/>
            <person name="Capuano V."/>
            <person name="Carter N.M."/>
            <person name="Choi S.-K."/>
            <person name="Codani J.-J."/>
            <person name="Connerton I.F."/>
            <person name="Cummings N.J."/>
            <person name="Daniel R.A."/>
            <person name="Denizot F."/>
            <person name="Devine K.M."/>
            <person name="Duesterhoeft A."/>
            <person name="Ehrlich S.D."/>
            <person name="Emmerson P.T."/>
            <person name="Entian K.-D."/>
            <person name="Errington J."/>
            <person name="Fabret C."/>
            <person name="Ferrari E."/>
            <person name="Foulger D."/>
            <person name="Fritz C."/>
            <person name="Fujita M."/>
            <person name="Fujita Y."/>
            <person name="Fuma S."/>
            <person name="Galizzi A."/>
            <person name="Galleron N."/>
            <person name="Ghim S.-Y."/>
            <person name="Glaser P."/>
            <person name="Goffeau A."/>
            <person name="Golightly E.J."/>
            <person name="Grandi G."/>
            <person name="Guiseppi G."/>
            <person name="Guy B.J."/>
            <person name="Haga K."/>
            <person name="Haiech J."/>
            <person name="Harwood C.R."/>
            <person name="Henaut A."/>
            <person name="Hilbert H."/>
            <person name="Holsappel S."/>
            <person name="Hosono S."/>
            <person name="Hullo M.-F."/>
            <person name="Itaya M."/>
            <person name="Jones L.-M."/>
            <person name="Joris B."/>
            <person name="Karamata D."/>
            <person name="Kasahara Y."/>
            <person name="Klaerr-Blanchard M."/>
            <person name="Klein C."/>
            <person name="Kobayashi Y."/>
            <person name="Koetter P."/>
            <person name="Koningstein G."/>
            <person name="Krogh S."/>
            <person name="Kumano M."/>
            <person name="Kurita K."/>
            <person name="Lapidus A."/>
            <person name="Lardinois S."/>
            <person name="Lauber J."/>
            <person name="Lazarevic V."/>
            <person name="Lee S.-M."/>
            <person name="Levine A."/>
            <person name="Liu H."/>
            <person name="Masuda S."/>
            <person name="Mauel C."/>
            <person name="Medigue C."/>
            <person name="Medina N."/>
            <person name="Mellado R.P."/>
            <person name="Mizuno M."/>
            <person name="Moestl D."/>
            <person name="Nakai S."/>
            <person name="Noback M."/>
            <person name="Noone D."/>
            <person name="O'Reilly M."/>
            <person name="Ogawa K."/>
            <person name="Ogiwara A."/>
            <person name="Oudega B."/>
            <person name="Park S.-H."/>
            <person name="Parro V."/>
            <person name="Pohl T.M."/>
            <person name="Portetelle D."/>
            <person name="Porwollik S."/>
            <person name="Prescott A.M."/>
            <person name="Presecan E."/>
            <person name="Pujic P."/>
            <person name="Purnelle B."/>
            <person name="Rapoport G."/>
            <person name="Rey M."/>
            <person name="Reynolds S."/>
            <person name="Rieger M."/>
            <person name="Rivolta C."/>
            <person name="Rocha E."/>
            <person name="Roche B."/>
            <person name="Rose M."/>
            <person name="Sadaie Y."/>
            <person name="Sato T."/>
            <person name="Scanlan E."/>
            <person name="Schleich S."/>
            <person name="Schroeter R."/>
            <person name="Scoffone F."/>
            <person name="Sekiguchi J."/>
            <person name="Sekowska A."/>
            <person name="Seror S.J."/>
            <person name="Serror P."/>
            <person name="Shin B.-S."/>
            <person name="Soldo B."/>
            <person name="Sorokin A."/>
            <person name="Tacconi E."/>
            <person name="Takagi T."/>
            <person name="Takahashi H."/>
            <person name="Takemaru K."/>
            <person name="Takeuchi M."/>
            <person name="Tamakoshi A."/>
            <person name="Tanaka T."/>
            <person name="Terpstra P."/>
            <person name="Tognoni A."/>
            <person name="Tosato V."/>
            <person name="Uchiyama S."/>
            <person name="Vandenbol M."/>
            <person name="Vannier F."/>
            <person name="Vassarotti A."/>
            <person name="Viari A."/>
            <person name="Wambutt R."/>
            <person name="Wedler E."/>
            <person name="Wedler H."/>
            <person name="Weitzenegger T."/>
            <person name="Winters P."/>
            <person name="Wipat A."/>
            <person name="Yamamoto H."/>
            <person name="Yamane K."/>
            <person name="Yasumoto K."/>
            <person name="Yata K."/>
            <person name="Yoshida K."/>
            <person name="Yoshikawa H.-F."/>
            <person name="Zumstein E."/>
            <person name="Yoshikawa H."/>
            <person name="Danchin A."/>
        </authorList>
    </citation>
    <scope>NUCLEOTIDE SEQUENCE [LARGE SCALE GENOMIC DNA]</scope>
    <source>
        <strain>168</strain>
    </source>
</reference>
<reference key="3">
    <citation type="journal article" date="1997" name="Microbiology">
        <title>A 23911 bp region of the Bacillus subtilis genome comprising genes located upstream and downstream of the lev operon.</title>
        <authorList>
            <person name="Parro V."/>
            <person name="San Roman M."/>
            <person name="Galindo I."/>
            <person name="Purnelle B."/>
            <person name="Bolotin A."/>
            <person name="Sorokin A."/>
            <person name="Mellado R.P."/>
        </authorList>
    </citation>
    <scope>NUCLEOTIDE SEQUENCE [GENOMIC DNA] OF 1-360</scope>
    <source>
        <strain>168</strain>
    </source>
</reference>
<gene>
    <name type="primary">yraO</name>
    <name type="ordered locus">BSU26860</name>
</gene>
<accession>O05407</accession>